<keyword id="KW-0520">NAD</keyword>
<keyword id="KW-0560">Oxidoreductase</keyword>
<keyword id="KW-0816">Tricarboxylic acid cycle</keyword>
<proteinExistence type="inferred from homology"/>
<evidence type="ECO:0000255" key="1">
    <source>
        <dbReference type="HAMAP-Rule" id="MF_00487"/>
    </source>
</evidence>
<reference key="1">
    <citation type="journal article" date="2004" name="PLoS Biol.">
        <title>Phylogenomics of the reproductive parasite Wolbachia pipientis wMel: a streamlined genome overrun by mobile genetic elements.</title>
        <authorList>
            <person name="Wu M."/>
            <person name="Sun L.V."/>
            <person name="Vamathevan J.J."/>
            <person name="Riegler M."/>
            <person name="DeBoy R.T."/>
            <person name="Brownlie J.C."/>
            <person name="McGraw E.A."/>
            <person name="Martin W."/>
            <person name="Esser C."/>
            <person name="Ahmadinejad N."/>
            <person name="Wiegand C."/>
            <person name="Madupu R."/>
            <person name="Beanan M.J."/>
            <person name="Brinkac L.M."/>
            <person name="Daugherty S.C."/>
            <person name="Durkin A.S."/>
            <person name="Kolonay J.F."/>
            <person name="Nelson W.C."/>
            <person name="Mohamoud Y."/>
            <person name="Lee P."/>
            <person name="Berry K.J."/>
            <person name="Young M.B."/>
            <person name="Utterback T.R."/>
            <person name="Weidman J.F."/>
            <person name="Nierman W.C."/>
            <person name="Paulsen I.T."/>
            <person name="Nelson K.E."/>
            <person name="Tettelin H."/>
            <person name="O'Neill S.L."/>
            <person name="Eisen J.A."/>
        </authorList>
    </citation>
    <scope>NUCLEOTIDE SEQUENCE [LARGE SCALE GENOMIC DNA]</scope>
</reference>
<gene>
    <name evidence="1" type="primary">mdh</name>
    <name type="ordered locus">WD_1121</name>
</gene>
<comment type="function">
    <text evidence="1">Catalyzes the reversible oxidation of malate to oxaloacetate.</text>
</comment>
<comment type="catalytic activity">
    <reaction evidence="1">
        <text>(S)-malate + NAD(+) = oxaloacetate + NADH + H(+)</text>
        <dbReference type="Rhea" id="RHEA:21432"/>
        <dbReference type="ChEBI" id="CHEBI:15378"/>
        <dbReference type="ChEBI" id="CHEBI:15589"/>
        <dbReference type="ChEBI" id="CHEBI:16452"/>
        <dbReference type="ChEBI" id="CHEBI:57540"/>
        <dbReference type="ChEBI" id="CHEBI:57945"/>
        <dbReference type="EC" id="1.1.1.37"/>
    </reaction>
</comment>
<comment type="similarity">
    <text evidence="1">Belongs to the LDH/MDH superfamily. MDH type 3 family.</text>
</comment>
<dbReference type="EC" id="1.1.1.37" evidence="1"/>
<dbReference type="EMBL" id="AE017196">
    <property type="protein sequence ID" value="AAS14774.1"/>
    <property type="molecule type" value="Genomic_DNA"/>
</dbReference>
<dbReference type="RefSeq" id="WP_007548577.1">
    <property type="nucleotide sequence ID" value="NZ_OX384529.1"/>
</dbReference>
<dbReference type="SMR" id="Q73G44"/>
<dbReference type="EnsemblBacteria" id="AAS14774">
    <property type="protein sequence ID" value="AAS14774"/>
    <property type="gene ID" value="WD_1121"/>
</dbReference>
<dbReference type="GeneID" id="70036595"/>
<dbReference type="KEGG" id="wol:WD_1121"/>
<dbReference type="eggNOG" id="COG0039">
    <property type="taxonomic scope" value="Bacteria"/>
</dbReference>
<dbReference type="Proteomes" id="UP000008215">
    <property type="component" value="Chromosome"/>
</dbReference>
<dbReference type="GO" id="GO:0004459">
    <property type="term" value="F:L-lactate dehydrogenase activity"/>
    <property type="evidence" value="ECO:0007669"/>
    <property type="project" value="TreeGrafter"/>
</dbReference>
<dbReference type="GO" id="GO:0030060">
    <property type="term" value="F:L-malate dehydrogenase (NAD+) activity"/>
    <property type="evidence" value="ECO:0007669"/>
    <property type="project" value="UniProtKB-UniRule"/>
</dbReference>
<dbReference type="GO" id="GO:0006089">
    <property type="term" value="P:lactate metabolic process"/>
    <property type="evidence" value="ECO:0007669"/>
    <property type="project" value="TreeGrafter"/>
</dbReference>
<dbReference type="GO" id="GO:0006099">
    <property type="term" value="P:tricarboxylic acid cycle"/>
    <property type="evidence" value="ECO:0007669"/>
    <property type="project" value="UniProtKB-UniRule"/>
</dbReference>
<dbReference type="CDD" id="cd01339">
    <property type="entry name" value="LDH-like_MDH"/>
    <property type="match status" value="1"/>
</dbReference>
<dbReference type="FunFam" id="3.40.50.720:FF:000018">
    <property type="entry name" value="Malate dehydrogenase"/>
    <property type="match status" value="1"/>
</dbReference>
<dbReference type="FunFam" id="3.90.110.10:FF:000004">
    <property type="entry name" value="Malate dehydrogenase"/>
    <property type="match status" value="1"/>
</dbReference>
<dbReference type="Gene3D" id="3.90.110.10">
    <property type="entry name" value="Lactate dehydrogenase/glycoside hydrolase, family 4, C-terminal"/>
    <property type="match status" value="1"/>
</dbReference>
<dbReference type="Gene3D" id="3.40.50.720">
    <property type="entry name" value="NAD(P)-binding Rossmann-like Domain"/>
    <property type="match status" value="1"/>
</dbReference>
<dbReference type="HAMAP" id="MF_00487">
    <property type="entry name" value="Malate_dehydrog_3"/>
    <property type="match status" value="1"/>
</dbReference>
<dbReference type="InterPro" id="IPR001557">
    <property type="entry name" value="L-lactate/malate_DH"/>
</dbReference>
<dbReference type="InterPro" id="IPR022383">
    <property type="entry name" value="Lactate/malate_DH_C"/>
</dbReference>
<dbReference type="InterPro" id="IPR001236">
    <property type="entry name" value="Lactate/malate_DH_N"/>
</dbReference>
<dbReference type="InterPro" id="IPR015955">
    <property type="entry name" value="Lactate_DH/Glyco_Ohase_4_C"/>
</dbReference>
<dbReference type="InterPro" id="IPR011275">
    <property type="entry name" value="Malate_DH_type3"/>
</dbReference>
<dbReference type="InterPro" id="IPR036291">
    <property type="entry name" value="NAD(P)-bd_dom_sf"/>
</dbReference>
<dbReference type="NCBIfam" id="TIGR01763">
    <property type="entry name" value="MalateDH_bact"/>
    <property type="match status" value="1"/>
</dbReference>
<dbReference type="NCBIfam" id="NF004863">
    <property type="entry name" value="PRK06223.1"/>
    <property type="match status" value="1"/>
</dbReference>
<dbReference type="PANTHER" id="PTHR43128">
    <property type="entry name" value="L-2-HYDROXYCARBOXYLATE DEHYDROGENASE (NAD(P)(+))"/>
    <property type="match status" value="1"/>
</dbReference>
<dbReference type="PANTHER" id="PTHR43128:SF16">
    <property type="entry name" value="L-LACTATE DEHYDROGENASE"/>
    <property type="match status" value="1"/>
</dbReference>
<dbReference type="Pfam" id="PF02866">
    <property type="entry name" value="Ldh_1_C"/>
    <property type="match status" value="1"/>
</dbReference>
<dbReference type="Pfam" id="PF00056">
    <property type="entry name" value="Ldh_1_N"/>
    <property type="match status" value="1"/>
</dbReference>
<dbReference type="PIRSF" id="PIRSF000102">
    <property type="entry name" value="Lac_mal_DH"/>
    <property type="match status" value="1"/>
</dbReference>
<dbReference type="PRINTS" id="PR00086">
    <property type="entry name" value="LLDHDRGNASE"/>
</dbReference>
<dbReference type="SUPFAM" id="SSF56327">
    <property type="entry name" value="LDH C-terminal domain-like"/>
    <property type="match status" value="1"/>
</dbReference>
<dbReference type="SUPFAM" id="SSF51735">
    <property type="entry name" value="NAD(P)-binding Rossmann-fold domains"/>
    <property type="match status" value="1"/>
</dbReference>
<protein>
    <recommendedName>
        <fullName evidence="1">Malate dehydrogenase</fullName>
        <ecNumber evidence="1">1.1.1.37</ecNumber>
    </recommendedName>
</protein>
<name>MDH_WOLPM</name>
<feature type="chain" id="PRO_0000113476" description="Malate dehydrogenase">
    <location>
        <begin position="1"/>
        <end position="316"/>
    </location>
</feature>
<feature type="active site" description="Proton acceptor" evidence="1">
    <location>
        <position position="178"/>
    </location>
</feature>
<feature type="binding site" evidence="1">
    <location>
        <begin position="12"/>
        <end position="17"/>
    </location>
    <ligand>
        <name>NAD(+)</name>
        <dbReference type="ChEBI" id="CHEBI:57540"/>
    </ligand>
</feature>
<feature type="binding site" evidence="1">
    <location>
        <position position="36"/>
    </location>
    <ligand>
        <name>NAD(+)</name>
        <dbReference type="ChEBI" id="CHEBI:57540"/>
    </ligand>
</feature>
<feature type="binding site" evidence="1">
    <location>
        <position position="85"/>
    </location>
    <ligand>
        <name>substrate</name>
    </ligand>
</feature>
<feature type="binding site" evidence="1">
    <location>
        <position position="91"/>
    </location>
    <ligand>
        <name>substrate</name>
    </ligand>
</feature>
<feature type="binding site" evidence="1">
    <location>
        <position position="98"/>
    </location>
    <ligand>
        <name>NAD(+)</name>
        <dbReference type="ChEBI" id="CHEBI:57540"/>
    </ligand>
</feature>
<feature type="binding site" evidence="1">
    <location>
        <begin position="121"/>
        <end position="123"/>
    </location>
    <ligand>
        <name>NAD(+)</name>
        <dbReference type="ChEBI" id="CHEBI:57540"/>
    </ligand>
</feature>
<feature type="binding site" evidence="1">
    <location>
        <position position="123"/>
    </location>
    <ligand>
        <name>substrate</name>
    </ligand>
</feature>
<feature type="binding site" evidence="1">
    <location>
        <position position="154"/>
    </location>
    <ligand>
        <name>substrate</name>
    </ligand>
</feature>
<sequence>MTVQRKKISLIGAGNIGGTLTHMIALRELGDVVLLDISDGIPQGKALDIAESSPIDGFNVNITGTNRYEDIKNSDAIIITAGIARKPGMSRDDLLQTNAKVMKEVGENIKKYSPNAFVIVVTNPLDAMVSVVHKFSNLPTNMIVGMAGVLDSSRFRYFLASELNISVEDISAFVLGGHGDTMVPLINCASVAGVPLTQIIDMGLITQKKVDEIVERTRNGGKEIVDLLKSGSAYYAPASSAICMLESYLKDKRRILPCAAYLNGEYGVEELFIGVPVIIGKNGIEKILEVKMNDSEQEMFNKSVNSVRELVKSLGS</sequence>
<accession>Q73G44</accession>
<organism>
    <name type="scientific">Wolbachia pipientis wMel</name>
    <dbReference type="NCBI Taxonomy" id="163164"/>
    <lineage>
        <taxon>Bacteria</taxon>
        <taxon>Pseudomonadati</taxon>
        <taxon>Pseudomonadota</taxon>
        <taxon>Alphaproteobacteria</taxon>
        <taxon>Rickettsiales</taxon>
        <taxon>Anaplasmataceae</taxon>
        <taxon>Wolbachieae</taxon>
        <taxon>Wolbachia</taxon>
    </lineage>
</organism>